<accession>P34311</accession>
<feature type="chain" id="PRO_0000070224" description="Probable G-protein coupled receptor C06G4.5">
    <location>
        <begin position="1"/>
        <end position="436"/>
    </location>
</feature>
<feature type="topological domain" description="Extracellular" evidence="1">
    <location>
        <begin position="1"/>
        <end position="53"/>
    </location>
</feature>
<feature type="transmembrane region" description="Helical; Name=1" evidence="1">
    <location>
        <begin position="54"/>
        <end position="74"/>
    </location>
</feature>
<feature type="topological domain" description="Cytoplasmic" evidence="1">
    <location>
        <begin position="75"/>
        <end position="94"/>
    </location>
</feature>
<feature type="transmembrane region" description="Helical; Name=2" evidence="1">
    <location>
        <begin position="95"/>
        <end position="115"/>
    </location>
</feature>
<feature type="topological domain" description="Extracellular" evidence="1">
    <location>
        <begin position="116"/>
        <end position="132"/>
    </location>
</feature>
<feature type="transmembrane region" description="Helical; Name=3" evidence="1">
    <location>
        <begin position="133"/>
        <end position="153"/>
    </location>
</feature>
<feature type="topological domain" description="Cytoplasmic" evidence="1">
    <location>
        <begin position="154"/>
        <end position="171"/>
    </location>
</feature>
<feature type="transmembrane region" description="Helical; Name=4" evidence="1">
    <location>
        <begin position="172"/>
        <end position="192"/>
    </location>
</feature>
<feature type="topological domain" description="Extracellular" evidence="1">
    <location>
        <begin position="193"/>
        <end position="230"/>
    </location>
</feature>
<feature type="transmembrane region" description="Helical; Name=5" evidence="1">
    <location>
        <begin position="231"/>
        <end position="251"/>
    </location>
</feature>
<feature type="topological domain" description="Cytoplasmic" evidence="1">
    <location>
        <begin position="252"/>
        <end position="281"/>
    </location>
</feature>
<feature type="transmembrane region" description="Helical; Name=6" evidence="1">
    <location>
        <begin position="282"/>
        <end position="302"/>
    </location>
</feature>
<feature type="topological domain" description="Extracellular" evidence="1">
    <location>
        <begin position="303"/>
        <end position="316"/>
    </location>
</feature>
<feature type="transmembrane region" description="Helical; Name=7" evidence="1">
    <location>
        <begin position="317"/>
        <end position="337"/>
    </location>
</feature>
<feature type="topological domain" description="Cytoplasmic" evidence="1">
    <location>
        <begin position="338"/>
        <end position="436"/>
    </location>
</feature>
<feature type="glycosylation site" description="N-linked (GlcNAc...) asparagine" evidence="1">
    <location>
        <position position="15"/>
    </location>
</feature>
<feature type="glycosylation site" description="N-linked (GlcNAc...) asparagine" evidence="1">
    <location>
        <position position="309"/>
    </location>
</feature>
<dbReference type="EMBL" id="FO080399">
    <property type="protein sequence ID" value="CCD63437.1"/>
    <property type="molecule type" value="Genomic_DNA"/>
</dbReference>
<dbReference type="PIR" id="S44747">
    <property type="entry name" value="S44747"/>
</dbReference>
<dbReference type="SMR" id="P34311"/>
<dbReference type="FunCoup" id="P34311">
    <property type="interactions" value="31"/>
</dbReference>
<dbReference type="STRING" id="6239.C06G4.5.1"/>
<dbReference type="PaxDb" id="6239-C06G4.5"/>
<dbReference type="EnsemblMetazoa" id="C06G4.5.1">
    <property type="protein sequence ID" value="C06G4.5.1"/>
    <property type="gene ID" value="WBGene00015559"/>
</dbReference>
<dbReference type="KEGG" id="cel:CELE_C06G4.5"/>
<dbReference type="UCSC" id="C06G4.5">
    <property type="organism name" value="c. elegans"/>
</dbReference>
<dbReference type="AGR" id="WB:WBGene00015559"/>
<dbReference type="CTD" id="176124"/>
<dbReference type="WormBase" id="C06G4.5">
    <property type="protein sequence ID" value="CE38997"/>
    <property type="gene ID" value="WBGene00015559"/>
    <property type="gene designation" value="npr-17"/>
</dbReference>
<dbReference type="eggNOG" id="KOG3656">
    <property type="taxonomic scope" value="Eukaryota"/>
</dbReference>
<dbReference type="GeneTree" id="ENSGT01130000278308"/>
<dbReference type="HOGENOM" id="CLU_048644_0_0_1"/>
<dbReference type="InParanoid" id="P34311"/>
<dbReference type="OMA" id="TNSAVNW"/>
<dbReference type="OrthoDB" id="6076970at2759"/>
<dbReference type="PhylomeDB" id="P34311"/>
<dbReference type="Reactome" id="R-CEL-202040">
    <property type="pathway name" value="G-protein activation"/>
</dbReference>
<dbReference type="Reactome" id="R-CEL-391908">
    <property type="pathway name" value="Prostanoid ligand receptors"/>
</dbReference>
<dbReference type="Reactome" id="R-CEL-416476">
    <property type="pathway name" value="G alpha (q) signalling events"/>
</dbReference>
<dbReference type="Reactome" id="R-CEL-418594">
    <property type="pathway name" value="G alpha (i) signalling events"/>
</dbReference>
<dbReference type="Reactome" id="R-CEL-5620922">
    <property type="pathway name" value="BBSome-mediated cargo-targeting to cilium"/>
</dbReference>
<dbReference type="PRO" id="PR:P34311"/>
<dbReference type="Proteomes" id="UP000001940">
    <property type="component" value="Chromosome III"/>
</dbReference>
<dbReference type="Bgee" id="WBGene00015559">
    <property type="expression patterns" value="Expressed in adult organism and 3 other cell types or tissues"/>
</dbReference>
<dbReference type="GO" id="GO:0043005">
    <property type="term" value="C:neuron projection"/>
    <property type="evidence" value="ECO:0000318"/>
    <property type="project" value="GO_Central"/>
</dbReference>
<dbReference type="GO" id="GO:0005886">
    <property type="term" value="C:plasma membrane"/>
    <property type="evidence" value="ECO:0000318"/>
    <property type="project" value="GO_Central"/>
</dbReference>
<dbReference type="GO" id="GO:0004930">
    <property type="term" value="F:G protein-coupled receptor activity"/>
    <property type="evidence" value="ECO:0000318"/>
    <property type="project" value="GO_Central"/>
</dbReference>
<dbReference type="CDD" id="cd00637">
    <property type="entry name" value="7tm_classA_rhodopsin-like"/>
    <property type="match status" value="1"/>
</dbReference>
<dbReference type="FunFam" id="1.20.1070.10:FF:001144">
    <property type="entry name" value="Probable G-protein coupled receptor C06G4.5"/>
    <property type="match status" value="1"/>
</dbReference>
<dbReference type="Gene3D" id="1.20.1070.10">
    <property type="entry name" value="Rhodopsin 7-helix transmembrane proteins"/>
    <property type="match status" value="1"/>
</dbReference>
<dbReference type="InterPro" id="IPR000276">
    <property type="entry name" value="GPCR_Rhodpsn"/>
</dbReference>
<dbReference type="InterPro" id="IPR017452">
    <property type="entry name" value="GPCR_Rhodpsn_7TM"/>
</dbReference>
<dbReference type="PANTHER" id="PTHR24229:SF95">
    <property type="entry name" value="G-PROTEIN COUPLED RECEPTOR C06G4.5-RELATED"/>
    <property type="match status" value="1"/>
</dbReference>
<dbReference type="PANTHER" id="PTHR24229">
    <property type="entry name" value="NEUROPEPTIDES RECEPTOR"/>
    <property type="match status" value="1"/>
</dbReference>
<dbReference type="Pfam" id="PF00001">
    <property type="entry name" value="7tm_1"/>
    <property type="match status" value="1"/>
</dbReference>
<dbReference type="PRINTS" id="PR00237">
    <property type="entry name" value="GPCRRHODOPSN"/>
</dbReference>
<dbReference type="SUPFAM" id="SSF81321">
    <property type="entry name" value="Family A G protein-coupled receptor-like"/>
    <property type="match status" value="1"/>
</dbReference>
<dbReference type="PROSITE" id="PS00237">
    <property type="entry name" value="G_PROTEIN_RECEP_F1_1"/>
    <property type="match status" value="1"/>
</dbReference>
<dbReference type="PROSITE" id="PS50262">
    <property type="entry name" value="G_PROTEIN_RECEP_F1_2"/>
    <property type="match status" value="1"/>
</dbReference>
<proteinExistence type="inferred from homology"/>
<protein>
    <recommendedName>
        <fullName>Probable G-protein coupled receptor C06G4.5</fullName>
    </recommendedName>
</protein>
<reference key="1">
    <citation type="journal article" date="1994" name="Nature">
        <title>2.2 Mb of contiguous nucleotide sequence from chromosome III of C. elegans.</title>
        <authorList>
            <person name="Wilson R."/>
            <person name="Ainscough R."/>
            <person name="Anderson K."/>
            <person name="Baynes C."/>
            <person name="Berks M."/>
            <person name="Bonfield J."/>
            <person name="Burton J."/>
            <person name="Connell M."/>
            <person name="Copsey T."/>
            <person name="Cooper J."/>
            <person name="Coulson A."/>
            <person name="Craxton M."/>
            <person name="Dear S."/>
            <person name="Du Z."/>
            <person name="Durbin R."/>
            <person name="Favello A."/>
            <person name="Fraser A."/>
            <person name="Fulton L."/>
            <person name="Gardner A."/>
            <person name="Green P."/>
            <person name="Hawkins T."/>
            <person name="Hillier L."/>
            <person name="Jier M."/>
            <person name="Johnston L."/>
            <person name="Jones M."/>
            <person name="Kershaw J."/>
            <person name="Kirsten J."/>
            <person name="Laisster N."/>
            <person name="Latreille P."/>
            <person name="Lightning J."/>
            <person name="Lloyd C."/>
            <person name="Mortimore B."/>
            <person name="O'Callaghan M."/>
            <person name="Parsons J."/>
            <person name="Percy C."/>
            <person name="Rifken L."/>
            <person name="Roopra A."/>
            <person name="Saunders D."/>
            <person name="Shownkeen R."/>
            <person name="Sims M."/>
            <person name="Smaldon N."/>
            <person name="Smith A."/>
            <person name="Smith M."/>
            <person name="Sonnhammer E."/>
            <person name="Staden R."/>
            <person name="Sulston J."/>
            <person name="Thierry-Mieg J."/>
            <person name="Thomas K."/>
            <person name="Vaudin M."/>
            <person name="Vaughan K."/>
            <person name="Waterston R."/>
            <person name="Watson A."/>
            <person name="Weinstock L."/>
            <person name="Wilkinson-Sproat J."/>
            <person name="Wohldman P."/>
        </authorList>
    </citation>
    <scope>NUCLEOTIDE SEQUENCE [LARGE SCALE GENOMIC DNA]</scope>
    <source>
        <strain>Bristol N2</strain>
    </source>
</reference>
<reference key="2">
    <citation type="journal article" date="1998" name="Science">
        <title>Genome sequence of the nematode C. elegans: a platform for investigating biology.</title>
        <authorList>
            <consortium name="The C. elegans sequencing consortium"/>
        </authorList>
    </citation>
    <scope>NUCLEOTIDE SEQUENCE [LARGE SCALE GENOMIC DNA]</scope>
    <source>
        <strain>Bristol N2</strain>
    </source>
</reference>
<evidence type="ECO:0000255" key="1"/>
<evidence type="ECO:0000255" key="2">
    <source>
        <dbReference type="PROSITE-ProRule" id="PRU00521"/>
    </source>
</evidence>
<evidence type="ECO:0000305" key="3"/>
<organism>
    <name type="scientific">Caenorhabditis elegans</name>
    <dbReference type="NCBI Taxonomy" id="6239"/>
    <lineage>
        <taxon>Eukaryota</taxon>
        <taxon>Metazoa</taxon>
        <taxon>Ecdysozoa</taxon>
        <taxon>Nematoda</taxon>
        <taxon>Chromadorea</taxon>
        <taxon>Rhabditida</taxon>
        <taxon>Rhabditina</taxon>
        <taxon>Rhabditomorpha</taxon>
        <taxon>Rhabditoidea</taxon>
        <taxon>Rhabditidae</taxon>
        <taxon>Peloderinae</taxon>
        <taxon>Caenorhabditis</taxon>
    </lineage>
</organism>
<name>YKR5_CAEEL</name>
<gene>
    <name type="ORF">C06G4.5</name>
</gene>
<keyword id="KW-1003">Cell membrane</keyword>
<keyword id="KW-0297">G-protein coupled receptor</keyword>
<keyword id="KW-0325">Glycoprotein</keyword>
<keyword id="KW-0472">Membrane</keyword>
<keyword id="KW-0675">Receptor</keyword>
<keyword id="KW-1185">Reference proteome</keyword>
<keyword id="KW-0807">Transducer</keyword>
<keyword id="KW-0812">Transmembrane</keyword>
<keyword id="KW-1133">Transmembrane helix</keyword>
<sequence>MSTNLVDYVDDSYLNQSMNSENGLDSVTQIMYDMKKYNIVNDVLPPPNHEDLHVVIMAVSYLLLFLLGTCGNVAVLTTIYHVIRSSRATLDNTLIYVIVLSCVDFGVCLSLPITVIDQILGFWMFGKIPCKLHAVFENFGKILSALILTAMSFDRYAGVCHPQRKRLRSRNFAITILLVLAVYAFITLCPLLWSFTAREIILYAKETAPGMLTRMKIEKCTVDIDSQMFTAFTIYQFILCYCTPLVLIAFFYTKLLSKLREHTRTFKSSQIPFLHISLYTLAVACFYFLCWTPFWMATLFAVYLENSANSSSVPPVFVYIMYFIHALPFTNSAINWILYGALNGQLQQRYRSNRSNSTKKTTTTTASTALLEKKITNLNTNSNYQVNGSMNSIATAAPTKTIGNNEVLVATSTIDDDVATDVVDVRLLSNHNPTFL</sequence>
<comment type="function">
    <text>Putative receptor.</text>
</comment>
<comment type="subcellular location">
    <subcellularLocation>
        <location evidence="3">Cell membrane</location>
        <topology evidence="3">Multi-pass membrane protein</topology>
    </subcellularLocation>
</comment>
<comment type="similarity">
    <text evidence="2">Belongs to the G-protein coupled receptor 1 family.</text>
</comment>